<comment type="function">
    <text evidence="1">Core subunit of the mitochondrial membrane respiratory chain NADH dehydrogenase (Complex I) which catalyzes electron transfer from NADH through the respiratory chain, using ubiquinone as an electron acceptor. Essential for the catalytic activity of complex I.</text>
</comment>
<comment type="catalytic activity">
    <reaction evidence="1">
        <text>a ubiquinone + NADH + 5 H(+)(in) = a ubiquinol + NAD(+) + 4 H(+)(out)</text>
        <dbReference type="Rhea" id="RHEA:29091"/>
        <dbReference type="Rhea" id="RHEA-COMP:9565"/>
        <dbReference type="Rhea" id="RHEA-COMP:9566"/>
        <dbReference type="ChEBI" id="CHEBI:15378"/>
        <dbReference type="ChEBI" id="CHEBI:16389"/>
        <dbReference type="ChEBI" id="CHEBI:17976"/>
        <dbReference type="ChEBI" id="CHEBI:57540"/>
        <dbReference type="ChEBI" id="CHEBI:57945"/>
        <dbReference type="EC" id="7.1.1.2"/>
    </reaction>
</comment>
<comment type="subunit">
    <text evidence="1">Core subunit of respiratory chain NADH dehydrogenase (Complex I) which is composed of 45 different subunits. Interacts with TMEM186. Interacts with TMEM242 (By similarity).</text>
</comment>
<comment type="subcellular location">
    <subcellularLocation>
        <location evidence="2">Mitochondrion inner membrane</location>
        <topology evidence="3">Multi-pass membrane protein</topology>
    </subcellularLocation>
</comment>
<comment type="similarity">
    <text evidence="4">Belongs to the complex I subunit 3 family.</text>
</comment>
<accession>O21584</accession>
<sequence>MNMIMVISVNIILSSTLILVAFWLPQLNIYTEKANPYECGFDPMSSARLPFSMKFFLVAITFLLFDLEIALLLPIPWAIQMPDMKTMMLTAFILVSILALGLAYEWTQKGLEWTE</sequence>
<proteinExistence type="inferred from homology"/>
<gene>
    <name evidence="1" type="primary">MT-ND3</name>
    <name type="synonym">MTND3</name>
    <name type="synonym">NADH3</name>
    <name type="synonym">ND3</name>
</gene>
<keyword id="KW-0249">Electron transport</keyword>
<keyword id="KW-0472">Membrane</keyword>
<keyword id="KW-0496">Mitochondrion</keyword>
<keyword id="KW-0999">Mitochondrion inner membrane</keyword>
<keyword id="KW-0520">NAD</keyword>
<keyword id="KW-0679">Respiratory chain</keyword>
<keyword id="KW-1278">Translocase</keyword>
<keyword id="KW-0812">Transmembrane</keyword>
<keyword id="KW-1133">Transmembrane helix</keyword>
<keyword id="KW-0813">Transport</keyword>
<keyword id="KW-0830">Ubiquinone</keyword>
<protein>
    <recommendedName>
        <fullName evidence="1">NADH-ubiquinone oxidoreductase chain 3</fullName>
        <ecNumber evidence="1">7.1.1.2</ecNumber>
    </recommendedName>
    <alternativeName>
        <fullName>NADH dehydrogenase subunit 3</fullName>
    </alternativeName>
</protein>
<geneLocation type="mitochondrion"/>
<organism>
    <name type="scientific">Baiomys taylori</name>
    <name type="common">Northern pygmy mouse</name>
    <dbReference type="NCBI Taxonomy" id="56219"/>
    <lineage>
        <taxon>Eukaryota</taxon>
        <taxon>Metazoa</taxon>
        <taxon>Chordata</taxon>
        <taxon>Craniata</taxon>
        <taxon>Vertebrata</taxon>
        <taxon>Euteleostomi</taxon>
        <taxon>Mammalia</taxon>
        <taxon>Eutheria</taxon>
        <taxon>Euarchontoglires</taxon>
        <taxon>Glires</taxon>
        <taxon>Rodentia</taxon>
        <taxon>Myomorpha</taxon>
        <taxon>Muroidea</taxon>
        <taxon>Cricetidae</taxon>
        <taxon>Neotominae</taxon>
        <taxon>Baiomys</taxon>
    </lineage>
</organism>
<name>NU3M_BAITA</name>
<feature type="chain" id="PRO_0000117712" description="NADH-ubiquinone oxidoreductase chain 3">
    <location>
        <begin position="1"/>
        <end position="115"/>
    </location>
</feature>
<feature type="transmembrane region" description="Helical" evidence="3">
    <location>
        <begin position="4"/>
        <end position="24"/>
    </location>
</feature>
<feature type="transmembrane region" description="Helical" evidence="3">
    <location>
        <begin position="55"/>
        <end position="75"/>
    </location>
</feature>
<feature type="transmembrane region" description="Helical" evidence="3">
    <location>
        <begin position="86"/>
        <end position="106"/>
    </location>
</feature>
<evidence type="ECO:0000250" key="1">
    <source>
        <dbReference type="UniProtKB" id="P03897"/>
    </source>
</evidence>
<evidence type="ECO:0000250" key="2">
    <source>
        <dbReference type="UniProtKB" id="P03898"/>
    </source>
</evidence>
<evidence type="ECO:0000255" key="3"/>
<evidence type="ECO:0000305" key="4"/>
<dbReference type="EC" id="7.1.1.2" evidence="1"/>
<dbReference type="EMBL" id="U83829">
    <property type="protein sequence ID" value="AAB87160.1"/>
    <property type="molecule type" value="Genomic_DNA"/>
</dbReference>
<dbReference type="SMR" id="O21584"/>
<dbReference type="GO" id="GO:0005743">
    <property type="term" value="C:mitochondrial inner membrane"/>
    <property type="evidence" value="ECO:0000250"/>
    <property type="project" value="UniProtKB"/>
</dbReference>
<dbReference type="GO" id="GO:0030964">
    <property type="term" value="C:NADH dehydrogenase complex"/>
    <property type="evidence" value="ECO:0007669"/>
    <property type="project" value="TreeGrafter"/>
</dbReference>
<dbReference type="GO" id="GO:0008137">
    <property type="term" value="F:NADH dehydrogenase (ubiquinone) activity"/>
    <property type="evidence" value="ECO:0000250"/>
    <property type="project" value="UniProtKB"/>
</dbReference>
<dbReference type="GO" id="GO:0006120">
    <property type="term" value="P:mitochondrial electron transport, NADH to ubiquinone"/>
    <property type="evidence" value="ECO:0000250"/>
    <property type="project" value="UniProtKB"/>
</dbReference>
<dbReference type="FunFam" id="1.20.58.1610:FF:000004">
    <property type="entry name" value="NADH-quinone oxidoreductase subunit A"/>
    <property type="match status" value="1"/>
</dbReference>
<dbReference type="Gene3D" id="1.20.58.1610">
    <property type="entry name" value="NADH:ubiquinone/plastoquinone oxidoreductase, chain 3"/>
    <property type="match status" value="1"/>
</dbReference>
<dbReference type="InterPro" id="IPR000440">
    <property type="entry name" value="NADH_UbQ/plastoQ_OxRdtase_su3"/>
</dbReference>
<dbReference type="InterPro" id="IPR038430">
    <property type="entry name" value="NDAH_ubi_oxred_su3_sf"/>
</dbReference>
<dbReference type="PANTHER" id="PTHR11058">
    <property type="entry name" value="NADH-UBIQUINONE OXIDOREDUCTASE CHAIN 3"/>
    <property type="match status" value="1"/>
</dbReference>
<dbReference type="PANTHER" id="PTHR11058:SF9">
    <property type="entry name" value="NADH-UBIQUINONE OXIDOREDUCTASE CHAIN 3"/>
    <property type="match status" value="1"/>
</dbReference>
<dbReference type="Pfam" id="PF00507">
    <property type="entry name" value="Oxidored_q4"/>
    <property type="match status" value="1"/>
</dbReference>
<reference key="1">
    <citation type="journal article" date="1998" name="Mol. Biol. Evol.">
        <title>Molecular systematics and paleobiogeography of the South American sigmodontine rodents.</title>
        <authorList>
            <person name="Engel S.R."/>
            <person name="Hogan K.M."/>
            <person name="Taylor J.F."/>
            <person name="Davis S.K."/>
        </authorList>
    </citation>
    <scope>NUCLEOTIDE SEQUENCE [GENOMIC DNA]</scope>
</reference>